<evidence type="ECO:0000255" key="1">
    <source>
        <dbReference type="HAMAP-Rule" id="MF_01673"/>
    </source>
</evidence>
<gene>
    <name evidence="1" type="primary">iolB</name>
    <name type="ordered locus">BLi04250</name>
    <name type="ordered locus">BL00245</name>
</gene>
<dbReference type="EC" id="5.3.1.30" evidence="1"/>
<dbReference type="EMBL" id="CP000002">
    <property type="protein sequence ID" value="AAU25684.1"/>
    <property type="molecule type" value="Genomic_DNA"/>
</dbReference>
<dbReference type="EMBL" id="AE017333">
    <property type="protein sequence ID" value="AAU43063.1"/>
    <property type="molecule type" value="Genomic_DNA"/>
</dbReference>
<dbReference type="RefSeq" id="WP_003177822.1">
    <property type="nucleotide sequence ID" value="NC_006322.1"/>
</dbReference>
<dbReference type="SMR" id="Q65D01"/>
<dbReference type="STRING" id="279010.BL00245"/>
<dbReference type="GeneID" id="92859180"/>
<dbReference type="KEGG" id="bld:BLi04250"/>
<dbReference type="KEGG" id="bli:BL00245"/>
<dbReference type="PATRIC" id="fig|279010.13.peg.4334"/>
<dbReference type="eggNOG" id="COG3718">
    <property type="taxonomic scope" value="Bacteria"/>
</dbReference>
<dbReference type="HOGENOM" id="CLU_066438_1_0_9"/>
<dbReference type="UniPathway" id="UPA00076">
    <property type="reaction ID" value="UER00920"/>
</dbReference>
<dbReference type="Proteomes" id="UP000000606">
    <property type="component" value="Chromosome"/>
</dbReference>
<dbReference type="GO" id="GO:0102482">
    <property type="term" value="F:5-deoxy-D-glucuronate isomerase activity"/>
    <property type="evidence" value="ECO:0007669"/>
    <property type="project" value="UniProtKB-EC"/>
</dbReference>
<dbReference type="GO" id="GO:0008880">
    <property type="term" value="F:glucuronate isomerase activity"/>
    <property type="evidence" value="ECO:0007669"/>
    <property type="project" value="InterPro"/>
</dbReference>
<dbReference type="GO" id="GO:0019310">
    <property type="term" value="P:inositol catabolic process"/>
    <property type="evidence" value="ECO:0007669"/>
    <property type="project" value="UniProtKB-UniRule"/>
</dbReference>
<dbReference type="Gene3D" id="2.60.120.10">
    <property type="entry name" value="Jelly Rolls"/>
    <property type="match status" value="2"/>
</dbReference>
<dbReference type="HAMAP" id="MF_01673">
    <property type="entry name" value="IolB"/>
    <property type="match status" value="1"/>
</dbReference>
<dbReference type="InterPro" id="IPR024203">
    <property type="entry name" value="Deoxy-glucuronate_isom_IolB"/>
</dbReference>
<dbReference type="InterPro" id="IPR023770">
    <property type="entry name" value="IolB_Bacilli"/>
</dbReference>
<dbReference type="InterPro" id="IPR021120">
    <property type="entry name" value="KduI/IolB_isomerase"/>
</dbReference>
<dbReference type="InterPro" id="IPR014710">
    <property type="entry name" value="RmlC-like_jellyroll"/>
</dbReference>
<dbReference type="InterPro" id="IPR011051">
    <property type="entry name" value="RmlC_Cupin_sf"/>
</dbReference>
<dbReference type="NCBIfam" id="TIGR04378">
    <property type="entry name" value="myo_inos_iolB"/>
    <property type="match status" value="1"/>
</dbReference>
<dbReference type="PANTHER" id="PTHR39193">
    <property type="entry name" value="5-DEOXY-GLUCURONATE ISOMERASE"/>
    <property type="match status" value="1"/>
</dbReference>
<dbReference type="PANTHER" id="PTHR39193:SF1">
    <property type="entry name" value="5-DEOXY-GLUCURONATE ISOMERASE"/>
    <property type="match status" value="1"/>
</dbReference>
<dbReference type="Pfam" id="PF04962">
    <property type="entry name" value="KduI"/>
    <property type="match status" value="1"/>
</dbReference>
<dbReference type="PIRSF" id="PIRSF036628">
    <property type="entry name" value="IolB"/>
    <property type="match status" value="1"/>
</dbReference>
<dbReference type="SUPFAM" id="SSF51182">
    <property type="entry name" value="RmlC-like cupins"/>
    <property type="match status" value="1"/>
</dbReference>
<keyword id="KW-0413">Isomerase</keyword>
<keyword id="KW-1185">Reference proteome</keyword>
<comment type="function">
    <text evidence="1">Involved in the isomerization of 5-deoxy-glucuronate (5DG) to 5-dehydro-2-deoxy-D-gluconate (DKG or 2-deoxy-5-keto-D-gluconate).</text>
</comment>
<comment type="catalytic activity">
    <reaction evidence="1">
        <text>5-deoxy-D-glucuronate = 5-dehydro-2-deoxy-D-gluconate</text>
        <dbReference type="Rhea" id="RHEA:25840"/>
        <dbReference type="ChEBI" id="CHEBI:16669"/>
        <dbReference type="ChEBI" id="CHEBI:58852"/>
        <dbReference type="EC" id="5.3.1.30"/>
    </reaction>
</comment>
<comment type="pathway">
    <text evidence="1">Polyol metabolism; myo-inositol degradation into acetyl-CoA; acetyl-CoA from myo-inositol: step 4/7.</text>
</comment>
<comment type="similarity">
    <text evidence="1">Belongs to the isomerase IolB family.</text>
</comment>
<name>IOLB_BACLD</name>
<reference key="1">
    <citation type="journal article" date="2004" name="J. Mol. Microbiol. Biotechnol.">
        <title>The complete genome sequence of Bacillus licheniformis DSM13, an organism with great industrial potential.</title>
        <authorList>
            <person name="Veith B."/>
            <person name="Herzberg C."/>
            <person name="Steckel S."/>
            <person name="Feesche J."/>
            <person name="Maurer K.H."/>
            <person name="Ehrenreich P."/>
            <person name="Baeumer S."/>
            <person name="Henne A."/>
            <person name="Liesegang H."/>
            <person name="Merkl R."/>
            <person name="Ehrenreich A."/>
            <person name="Gottschalk G."/>
        </authorList>
    </citation>
    <scope>NUCLEOTIDE SEQUENCE [LARGE SCALE GENOMIC DNA]</scope>
    <source>
        <strain>ATCC 14580 / DSM 13 / JCM 2505 / CCUG 7422 / NBRC 12200 / NCIMB 9375 / NCTC 10341 / NRRL NRS-1264 / Gibson 46</strain>
    </source>
</reference>
<reference key="2">
    <citation type="journal article" date="2004" name="Genome Biol.">
        <title>Complete genome sequence of the industrial bacterium Bacillus licheniformis and comparisons with closely related Bacillus species.</title>
        <authorList>
            <person name="Rey M.W."/>
            <person name="Ramaiya P."/>
            <person name="Nelson B.A."/>
            <person name="Brody-Karpin S.D."/>
            <person name="Zaretsky E.J."/>
            <person name="Tang M."/>
            <person name="Lopez de Leon A."/>
            <person name="Xiang H."/>
            <person name="Gusti V."/>
            <person name="Clausen I.G."/>
            <person name="Olsen P.B."/>
            <person name="Rasmussen M.D."/>
            <person name="Andersen J.T."/>
            <person name="Joergensen P.L."/>
            <person name="Larsen T.S."/>
            <person name="Sorokin A."/>
            <person name="Bolotin A."/>
            <person name="Lapidus A."/>
            <person name="Galleron N."/>
            <person name="Ehrlich S.D."/>
            <person name="Berka R.M."/>
        </authorList>
    </citation>
    <scope>NUCLEOTIDE SEQUENCE [LARGE SCALE GENOMIC DNA]</scope>
    <source>
        <strain>ATCC 14580 / DSM 13 / JCM 2505 / CCUG 7422 / NBRC 12200 / NCIMB 9375 / NCTC 10341 / NRRL NRS-1264 / Gibson 46</strain>
    </source>
</reference>
<organism>
    <name type="scientific">Bacillus licheniformis (strain ATCC 14580 / DSM 13 / JCM 2505 / CCUG 7422 / NBRC 12200 / NCIMB 9375 / NCTC 10341 / NRRL NRS-1264 / Gibson 46)</name>
    <dbReference type="NCBI Taxonomy" id="279010"/>
    <lineage>
        <taxon>Bacteria</taxon>
        <taxon>Bacillati</taxon>
        <taxon>Bacillota</taxon>
        <taxon>Bacilli</taxon>
        <taxon>Bacillales</taxon>
        <taxon>Bacillaceae</taxon>
        <taxon>Bacillus</taxon>
    </lineage>
</organism>
<proteinExistence type="inferred from homology"/>
<accession>Q65D01</accession>
<accession>Q62NH7</accession>
<protein>
    <recommendedName>
        <fullName evidence="1">5-deoxy-glucuronate isomerase</fullName>
        <shortName evidence="1">5DG isomerase</shortName>
        <ecNumber evidence="1">5.3.1.30</ecNumber>
    </recommendedName>
</protein>
<feature type="chain" id="PRO_0000352385" description="5-deoxy-glucuronate isomerase">
    <location>
        <begin position="1"/>
        <end position="271"/>
    </location>
</feature>
<sequence length="271" mass="30746">MSHLLRKPQANELSQGVKLVHEVKKSNSDLSYVEFKVLDLAPGSSYEESLSKQECCIVALTGKITATDHEQTFENIGTRESVFERKPTDSVYVSNDRKFGITAVTEARVALCYSPSENQLPTKLIKAEDNGIENRGKFSNKRTVHNILPDSDPSANSLLVVEVYTESGNWSSYPPHKHDQDNLPEESFLEETYYHELDPQQGFVFQRVYTDDRSIDETMTVENGNVVIVPAGYHPVGVPDGYTSYYLNVMAGPTRKWKFHNDPDHEWILER</sequence>